<protein>
    <recommendedName>
        <fullName evidence="10">Target of rapamycin complex 2 subunit ste20</fullName>
        <shortName>TORC2 subunit ste20</shortName>
    </recommendedName>
</protein>
<sequence>MKPVRRGQTDTALDISSHAKTNGDFIKKMNTTDSKRLKLLEDLKGKLEVECKIRDGAETLLQVFDTNFKKETKERKEMLKKKCTDELESSKKKIEELVSSIESFQGENGEAKTGSTSLTRSASATVSRKSSLQEKYSTRFSYKAGCSDSCSVTVSGTGELIGPTRNAHSNLTPTVIQRIDFENVNEKNNSSSEDTQPNGKRPSSLQSNFSQFPLNPWLDNIYKACLEGSMKDVIDSSNNLCEYLHEHSDPAYAKNFSLITPTILSMLELNVSEVTASVYRLLRHLFLDATAFSCCQMLNLPWILSKSLLSGTDAYQIEREQAFRLIRTLYFLSSTEGHEDYLSGITRTIISICEHVSDVSRGIAVETLIELMIIRPKILFKANGLRVLMISLIDGSISENLAASAALALVYLLDDPESACYVNLPYDIGILLSPFTSSSSRDTFNSSEEQSEQAAKAMKSSAKVASVLLNSWSGLLALSTNDFQALRSIVDTLRVPSFAPRSDVIDLFFLIFQVEYSSWSESFLAGKRLTVVKNQAVSNDDNINMVNIPDGSNKKYMSLRQHFTAVLLFIFLELGLVESIVCMIRASDDPSASRKATYLLGEVLRLSDELLPIHLGAKIQSLPSLFNMASQFTAEDRFVATSVLQSIESLNRVKFHSATQPFSQTTSLLFKEQKTDGSFRGQRQVEHVKLKMGMQIDDSHFRSMLAETNVLATKNYQKWRWDTLVQIMEGPLLSPKRIDETLRTTKFMRRLLAFYKPFSNRFSSIQNTKPNQKFIKVGCLVFRTLLANPEGVKYLSESKVIKQIAESLSQIDGYSEQVSEPIFSNSRLQKTLTHGYFPMLKVLSSQKEGHAIMERWRIFTTLYHLTELRNRDDLIIIFLTNLDYRLEGHTRIIFSKALNTGQQAVRLTATKHLAALINSESANDNLNHWAISLLIFQLYDPCLEVCKTAVKVLNEVCARNENLLAQVVQLQPSLAHLGEIGSPLLLRFLATTVGFHYLSEINFIEHELDNWYHHRNIDYVDLLEQNFFLSFVSNLKIIDKKNNEPDENILPLHFYGELVKSPQGCEVLESSGHFESFMGTLVEFYDKPLGNEAIRQLKSALWAIGNIGKTDQGITFLINHDTIPLIVKYAENSLIPTVRGTAYFVLGLISRTSKGVEILESLHWYSLMSLMGTSQGICIPRHAGQVLSTPRRNVEFVNERVPTPEFSSLLSSLTNSEREVIRLVSNLSNHVLTNESARQLTKIRSKNAKVFSSKRLVKACMTILGKFHYRVQIQQFVFELFPYSVLLSSSTSQDLNESPSRPNNLSISA</sequence>
<feature type="chain" id="PRO_0000072263" description="Target of rapamycin complex 2 subunit ste20">
    <location>
        <begin position="1"/>
        <end position="1309"/>
    </location>
</feature>
<feature type="transmembrane region" description="Helical" evidence="1">
    <location>
        <begin position="285"/>
        <end position="305"/>
    </location>
</feature>
<feature type="transmembrane region" description="Helical" evidence="1">
    <location>
        <begin position="392"/>
        <end position="412"/>
    </location>
</feature>
<feature type="transmembrane region" description="Helical" evidence="1">
    <location>
        <begin position="504"/>
        <end position="524"/>
    </location>
</feature>
<feature type="transmembrane region" description="Helical" evidence="1">
    <location>
        <begin position="564"/>
        <end position="584"/>
    </location>
</feature>
<feature type="transmembrane region" description="Helical" evidence="1">
    <location>
        <begin position="926"/>
        <end position="946"/>
    </location>
</feature>
<feature type="transmembrane region" description="Helical" evidence="1">
    <location>
        <begin position="984"/>
        <end position="1004"/>
    </location>
</feature>
<feature type="domain" description="REM-1" evidence="2">
    <location>
        <begin position="24"/>
        <end position="110"/>
    </location>
</feature>
<feature type="region of interest" description="Disordered" evidence="3">
    <location>
        <begin position="105"/>
        <end position="128"/>
    </location>
</feature>
<feature type="region of interest" description="Disordered" evidence="3">
    <location>
        <begin position="183"/>
        <end position="205"/>
    </location>
</feature>
<feature type="compositionally biased region" description="Polar residues" evidence="3">
    <location>
        <begin position="113"/>
        <end position="128"/>
    </location>
</feature>
<feature type="compositionally biased region" description="Polar residues" evidence="3">
    <location>
        <begin position="194"/>
        <end position="205"/>
    </location>
</feature>
<feature type="modified residue" description="Phosphoserine" evidence="7">
    <location>
        <position position="151"/>
    </location>
</feature>
<feature type="modified residue" description="Phosphothreonine" evidence="7">
    <location>
        <position position="1203"/>
    </location>
</feature>
<dbReference type="EMBL" id="AJ223984">
    <property type="protein sequence ID" value="CAA11758.1"/>
    <property type="molecule type" value="Genomic_DNA"/>
</dbReference>
<dbReference type="EMBL" id="CU329671">
    <property type="protein sequence ID" value="CAA90815.1"/>
    <property type="molecule type" value="Genomic_DNA"/>
</dbReference>
<dbReference type="PIR" id="T39379">
    <property type="entry name" value="T39379"/>
</dbReference>
<dbReference type="RefSeq" id="NP_596021.1">
    <property type="nucleotide sequence ID" value="NM_001021929.2"/>
</dbReference>
<dbReference type="SMR" id="Q09743"/>
<dbReference type="BioGRID" id="276393">
    <property type="interactions" value="200"/>
</dbReference>
<dbReference type="FunCoup" id="Q09743">
    <property type="interactions" value="306"/>
</dbReference>
<dbReference type="STRING" id="284812.Q09743"/>
<dbReference type="iPTMnet" id="Q09743"/>
<dbReference type="PaxDb" id="4896-SPBC12C2.02c.1"/>
<dbReference type="EnsemblFungi" id="SPBC12C2.02c.1">
    <property type="protein sequence ID" value="SPBC12C2.02c.1:pep"/>
    <property type="gene ID" value="SPBC12C2.02c"/>
</dbReference>
<dbReference type="GeneID" id="2539845"/>
<dbReference type="KEGG" id="spo:2539845"/>
<dbReference type="PomBase" id="SPBC12C2.02c">
    <property type="gene designation" value="ste20"/>
</dbReference>
<dbReference type="VEuPathDB" id="FungiDB:SPBC12C2.02c"/>
<dbReference type="eggNOG" id="KOG3694">
    <property type="taxonomic scope" value="Eukaryota"/>
</dbReference>
<dbReference type="HOGENOM" id="CLU_001013_1_1_1"/>
<dbReference type="InParanoid" id="Q09743"/>
<dbReference type="OMA" id="EIRIHAT"/>
<dbReference type="PhylomeDB" id="Q09743"/>
<dbReference type="Reactome" id="R-SPO-1257604">
    <property type="pathway name" value="PIP3 activates AKT signaling"/>
</dbReference>
<dbReference type="Reactome" id="R-SPO-389357">
    <property type="pathway name" value="CD28 dependent PI3K/Akt signaling"/>
</dbReference>
<dbReference type="Reactome" id="R-SPO-5218920">
    <property type="pathway name" value="VEGFR2 mediated vascular permeability"/>
</dbReference>
<dbReference type="Reactome" id="R-SPO-6804757">
    <property type="pathway name" value="Regulation of TP53 Degradation"/>
</dbReference>
<dbReference type="Reactome" id="R-SPO-9856530">
    <property type="pathway name" value="High laminar flow shear stress activates signaling by PIEZO1 and PECAM1:CDH5:KDR in endothelial cells"/>
</dbReference>
<dbReference type="PRO" id="PR:Q09743"/>
<dbReference type="Proteomes" id="UP000002485">
    <property type="component" value="Chromosome II"/>
</dbReference>
<dbReference type="GO" id="GO:0005938">
    <property type="term" value="C:cell cortex"/>
    <property type="evidence" value="ECO:0000314"/>
    <property type="project" value="PomBase"/>
</dbReference>
<dbReference type="GO" id="GO:0032153">
    <property type="term" value="C:cell division site"/>
    <property type="evidence" value="ECO:0007005"/>
    <property type="project" value="PomBase"/>
</dbReference>
<dbReference type="GO" id="GO:0005737">
    <property type="term" value="C:cytoplasm"/>
    <property type="evidence" value="ECO:0007005"/>
    <property type="project" value="PomBase"/>
</dbReference>
<dbReference type="GO" id="GO:0005829">
    <property type="term" value="C:cytosol"/>
    <property type="evidence" value="ECO:0000314"/>
    <property type="project" value="PomBase"/>
</dbReference>
<dbReference type="GO" id="GO:0016020">
    <property type="term" value="C:membrane"/>
    <property type="evidence" value="ECO:0007669"/>
    <property type="project" value="UniProtKB-SubCell"/>
</dbReference>
<dbReference type="GO" id="GO:0005634">
    <property type="term" value="C:nucleus"/>
    <property type="evidence" value="ECO:0007005"/>
    <property type="project" value="PomBase"/>
</dbReference>
<dbReference type="GO" id="GO:0031932">
    <property type="term" value="C:TORC2 complex"/>
    <property type="evidence" value="ECO:0000314"/>
    <property type="project" value="PomBase"/>
</dbReference>
<dbReference type="GO" id="GO:0051321">
    <property type="term" value="P:meiotic cell cycle"/>
    <property type="evidence" value="ECO:0007669"/>
    <property type="project" value="UniProtKB-KW"/>
</dbReference>
<dbReference type="GO" id="GO:0038203">
    <property type="term" value="P:TORC2 signaling"/>
    <property type="evidence" value="ECO:0000315"/>
    <property type="project" value="PomBase"/>
</dbReference>
<dbReference type="Gene3D" id="1.10.287.160">
    <property type="entry name" value="HR1 repeat"/>
    <property type="match status" value="1"/>
</dbReference>
<dbReference type="Gene3D" id="1.25.10.10">
    <property type="entry name" value="Leucine-rich Repeat Variant"/>
    <property type="match status" value="1"/>
</dbReference>
<dbReference type="InterPro" id="IPR011989">
    <property type="entry name" value="ARM-like"/>
</dbReference>
<dbReference type="InterPro" id="IPR016024">
    <property type="entry name" value="ARM-type_fold"/>
</dbReference>
<dbReference type="InterPro" id="IPR011072">
    <property type="entry name" value="HR1_rho-bd"/>
</dbReference>
<dbReference type="InterPro" id="IPR036274">
    <property type="entry name" value="HR1_rpt_sf"/>
</dbReference>
<dbReference type="InterPro" id="IPR028268">
    <property type="entry name" value="Pianissimo_fam"/>
</dbReference>
<dbReference type="InterPro" id="IPR028267">
    <property type="entry name" value="Pianissimo_N"/>
</dbReference>
<dbReference type="InterPro" id="IPR029453">
    <property type="entry name" value="Rictor_IV"/>
</dbReference>
<dbReference type="InterPro" id="IPR029451">
    <property type="entry name" value="RICTOR_M"/>
</dbReference>
<dbReference type="InterPro" id="IPR029452">
    <property type="entry name" value="RICTOR_V"/>
</dbReference>
<dbReference type="PANTHER" id="PTHR13298">
    <property type="entry name" value="CYTOSOLIC REGULATOR PIANISSIMO"/>
    <property type="match status" value="1"/>
</dbReference>
<dbReference type="PANTHER" id="PTHR13298:SF11">
    <property type="entry name" value="RAPAMYCIN-INSENSITIVE COMPANION OF MTOR"/>
    <property type="match status" value="1"/>
</dbReference>
<dbReference type="Pfam" id="PF02185">
    <property type="entry name" value="HR1"/>
    <property type="match status" value="1"/>
</dbReference>
<dbReference type="Pfam" id="PF14663">
    <property type="entry name" value="RasGEF_N_2"/>
    <property type="match status" value="1"/>
</dbReference>
<dbReference type="Pfam" id="PF14666">
    <property type="entry name" value="RICTOR_M"/>
    <property type="match status" value="1"/>
</dbReference>
<dbReference type="Pfam" id="PF14664">
    <property type="entry name" value="RICTOR_N"/>
    <property type="match status" value="1"/>
</dbReference>
<dbReference type="Pfam" id="PF14668">
    <property type="entry name" value="RICTOR_V"/>
    <property type="match status" value="1"/>
</dbReference>
<dbReference type="SMART" id="SM00742">
    <property type="entry name" value="Hr1"/>
    <property type="match status" value="1"/>
</dbReference>
<dbReference type="SMART" id="SM01303">
    <property type="entry name" value="RasGEF_N_2"/>
    <property type="match status" value="1"/>
</dbReference>
<dbReference type="SMART" id="SM01307">
    <property type="entry name" value="RICTOR_M"/>
    <property type="match status" value="1"/>
</dbReference>
<dbReference type="SMART" id="SM01308">
    <property type="entry name" value="RICTOR_N"/>
    <property type="match status" value="1"/>
</dbReference>
<dbReference type="SMART" id="SM01310">
    <property type="entry name" value="RICTOR_V"/>
    <property type="match status" value="1"/>
</dbReference>
<dbReference type="SUPFAM" id="SSF48371">
    <property type="entry name" value="ARM repeat"/>
    <property type="match status" value="1"/>
</dbReference>
<dbReference type="SUPFAM" id="SSF46585">
    <property type="entry name" value="HR1 repeat"/>
    <property type="match status" value="1"/>
</dbReference>
<dbReference type="PROSITE" id="PS51860">
    <property type="entry name" value="REM_1"/>
    <property type="match status" value="1"/>
</dbReference>
<reference key="1">
    <citation type="journal article" date="1999" name="Curr. Genet.">
        <title>Gene ste20 controls amiloride sensitivity and fertility in Schizosaccharomyces pombe.</title>
        <authorList>
            <person name="Hilti N."/>
            <person name="Baumann D."/>
            <person name="Schweingruber A.M."/>
            <person name="Bigler P."/>
            <person name="Schweingruber M.E."/>
        </authorList>
    </citation>
    <scope>NUCLEOTIDE SEQUENCE [GENOMIC DNA]</scope>
    <scope>FUNCTION</scope>
</reference>
<reference key="2">
    <citation type="journal article" date="2002" name="Nature">
        <title>The genome sequence of Schizosaccharomyces pombe.</title>
        <authorList>
            <person name="Wood V."/>
            <person name="Gwilliam R."/>
            <person name="Rajandream M.A."/>
            <person name="Lyne M.H."/>
            <person name="Lyne R."/>
            <person name="Stewart A."/>
            <person name="Sgouros J.G."/>
            <person name="Peat N."/>
            <person name="Hayles J."/>
            <person name="Baker S.G."/>
            <person name="Basham D."/>
            <person name="Bowman S."/>
            <person name="Brooks K."/>
            <person name="Brown D."/>
            <person name="Brown S."/>
            <person name="Chillingworth T."/>
            <person name="Churcher C.M."/>
            <person name="Collins M."/>
            <person name="Connor R."/>
            <person name="Cronin A."/>
            <person name="Davis P."/>
            <person name="Feltwell T."/>
            <person name="Fraser A."/>
            <person name="Gentles S."/>
            <person name="Goble A."/>
            <person name="Hamlin N."/>
            <person name="Harris D.E."/>
            <person name="Hidalgo J."/>
            <person name="Hodgson G."/>
            <person name="Holroyd S."/>
            <person name="Hornsby T."/>
            <person name="Howarth S."/>
            <person name="Huckle E.J."/>
            <person name="Hunt S."/>
            <person name="Jagels K."/>
            <person name="James K.D."/>
            <person name="Jones L."/>
            <person name="Jones M."/>
            <person name="Leather S."/>
            <person name="McDonald S."/>
            <person name="McLean J."/>
            <person name="Mooney P."/>
            <person name="Moule S."/>
            <person name="Mungall K.L."/>
            <person name="Murphy L.D."/>
            <person name="Niblett D."/>
            <person name="Odell C."/>
            <person name="Oliver K."/>
            <person name="O'Neil S."/>
            <person name="Pearson D."/>
            <person name="Quail M.A."/>
            <person name="Rabbinowitsch E."/>
            <person name="Rutherford K.M."/>
            <person name="Rutter S."/>
            <person name="Saunders D."/>
            <person name="Seeger K."/>
            <person name="Sharp S."/>
            <person name="Skelton J."/>
            <person name="Simmonds M.N."/>
            <person name="Squares R."/>
            <person name="Squares S."/>
            <person name="Stevens K."/>
            <person name="Taylor K."/>
            <person name="Taylor R.G."/>
            <person name="Tivey A."/>
            <person name="Walsh S.V."/>
            <person name="Warren T."/>
            <person name="Whitehead S."/>
            <person name="Woodward J.R."/>
            <person name="Volckaert G."/>
            <person name="Aert R."/>
            <person name="Robben J."/>
            <person name="Grymonprez B."/>
            <person name="Weltjens I."/>
            <person name="Vanstreels E."/>
            <person name="Rieger M."/>
            <person name="Schaefer M."/>
            <person name="Mueller-Auer S."/>
            <person name="Gabel C."/>
            <person name="Fuchs M."/>
            <person name="Duesterhoeft A."/>
            <person name="Fritzc C."/>
            <person name="Holzer E."/>
            <person name="Moestl D."/>
            <person name="Hilbert H."/>
            <person name="Borzym K."/>
            <person name="Langer I."/>
            <person name="Beck A."/>
            <person name="Lehrach H."/>
            <person name="Reinhardt R."/>
            <person name="Pohl T.M."/>
            <person name="Eger P."/>
            <person name="Zimmermann W."/>
            <person name="Wedler H."/>
            <person name="Wambutt R."/>
            <person name="Purnelle B."/>
            <person name="Goffeau A."/>
            <person name="Cadieu E."/>
            <person name="Dreano S."/>
            <person name="Gloux S."/>
            <person name="Lelaure V."/>
            <person name="Mottier S."/>
            <person name="Galibert F."/>
            <person name="Aves S.J."/>
            <person name="Xiang Z."/>
            <person name="Hunt C."/>
            <person name="Moore K."/>
            <person name="Hurst S.M."/>
            <person name="Lucas M."/>
            <person name="Rochet M."/>
            <person name="Gaillardin C."/>
            <person name="Tallada V.A."/>
            <person name="Garzon A."/>
            <person name="Thode G."/>
            <person name="Daga R.R."/>
            <person name="Cruzado L."/>
            <person name="Jimenez J."/>
            <person name="Sanchez M."/>
            <person name="del Rey F."/>
            <person name="Benito J."/>
            <person name="Dominguez A."/>
            <person name="Revuelta J.L."/>
            <person name="Moreno S."/>
            <person name="Armstrong J."/>
            <person name="Forsburg S.L."/>
            <person name="Cerutti L."/>
            <person name="Lowe T."/>
            <person name="McCombie W.R."/>
            <person name="Paulsen I."/>
            <person name="Potashkin J."/>
            <person name="Shpakovski G.V."/>
            <person name="Ussery D."/>
            <person name="Barrell B.G."/>
            <person name="Nurse P."/>
        </authorList>
    </citation>
    <scope>NUCLEOTIDE SEQUENCE [LARGE SCALE GENOMIC DNA]</scope>
    <source>
        <strain>972 / ATCC 24843</strain>
    </source>
</reference>
<reference key="3">
    <citation type="journal article" date="2006" name="J. Cell Sci.">
        <title>Fission yeast Tor2 promotes cell growth and represses cell differentiation.</title>
        <authorList>
            <person name="Alvarez B."/>
            <person name="Moreno S."/>
        </authorList>
    </citation>
    <scope>INTERACTION WITH TOR1</scope>
</reference>
<reference key="4">
    <citation type="journal article" date="2007" name="Genes Cells">
        <title>Rapamycin sensitivity of the Schizosaccharomyces pombe tor2 mutant and organization of two highly phosphorylated TOR complexes by specific and common subunits.</title>
        <authorList>
            <person name="Hayashi T."/>
            <person name="Hatanaka M."/>
            <person name="Nagao K."/>
            <person name="Nakaseko Y."/>
            <person name="Kanoh J."/>
            <person name="Kokubu A."/>
            <person name="Ebe M."/>
            <person name="Yanagida M."/>
        </authorList>
    </citation>
    <scope>IDENTIFICATION IN THE TORC2 COMPLEX</scope>
    <scope>PHOSPHORYLATION AT SER-151 AND THR-1203</scope>
    <scope>IDENTIFICATION BY MASS SPECTROMETRY</scope>
</reference>
<reference key="5">
    <citation type="journal article" date="2007" name="Mol. Cell. Biol.">
        <title>Loss of the TOR kinase Tor2 mimics nitrogen starvation and activates the sexual development pathway in fission yeast.</title>
        <authorList>
            <person name="Matsuo T."/>
            <person name="Otsubo Y."/>
            <person name="Urano J."/>
            <person name="Tamanoi F."/>
            <person name="Yamamoto M."/>
        </authorList>
    </citation>
    <scope>INTERACTION WITH TOR1</scope>
</reference>
<name>RICTR_SCHPO</name>
<accession>Q09743</accession>
<comment type="function">
    <text evidence="4 10">Component of TORC2, which regulates multiple cellular processes to control cell growth in response to environmental signals. TORC2 is required for cell survival under various stress conditions. TORC2 positively controls G1 cell-cycle arrest, sexual development and amino acid uptake. Positively regulates amino acid uptake through the control of expression of amino acid permeases.</text>
</comment>
<comment type="subunit">
    <text evidence="5 6 7">The target of rapamycin complex 2 (TORC2) is composed of at least bit61, pop3/wat1, sin1, ste20 and tor1.</text>
</comment>
<comment type="subcellular location">
    <subcellularLocation>
        <location evidence="9">Membrane</location>
        <topology evidence="9">Multi-pass membrane protein</topology>
    </subcellularLocation>
</comment>
<comment type="PTM">
    <text evidence="7">Either Ser-203 or Ser-204 are phosphorylated as well.</text>
</comment>
<comment type="similarity">
    <text evidence="9">Belongs to the RICTOR family.</text>
</comment>
<keyword id="KW-0131">Cell cycle</keyword>
<keyword id="KW-0175">Coiled coil</keyword>
<keyword id="KW-0469">Meiosis</keyword>
<keyword id="KW-0472">Membrane</keyword>
<keyword id="KW-0597">Phosphoprotein</keyword>
<keyword id="KW-1185">Reference proteome</keyword>
<keyword id="KW-0812">Transmembrane</keyword>
<keyword id="KW-1133">Transmembrane helix</keyword>
<gene>
    <name evidence="8" type="primary">ste20</name>
    <name evidence="11" type="ORF">SPBC12C2.02c</name>
</gene>
<evidence type="ECO:0000255" key="1"/>
<evidence type="ECO:0000255" key="2">
    <source>
        <dbReference type="PROSITE-ProRule" id="PRU01207"/>
    </source>
</evidence>
<evidence type="ECO:0000256" key="3">
    <source>
        <dbReference type="SAM" id="MobiDB-lite"/>
    </source>
</evidence>
<evidence type="ECO:0000269" key="4">
    <source>
    </source>
</evidence>
<evidence type="ECO:0000269" key="5">
    <source>
    </source>
</evidence>
<evidence type="ECO:0000269" key="6">
    <source>
    </source>
</evidence>
<evidence type="ECO:0000269" key="7">
    <source>
    </source>
</evidence>
<evidence type="ECO:0000303" key="8">
    <source>
    </source>
</evidence>
<evidence type="ECO:0000305" key="9"/>
<evidence type="ECO:0000305" key="10">
    <source>
    </source>
</evidence>
<evidence type="ECO:0000312" key="11">
    <source>
        <dbReference type="PomBase" id="SPBC12C2.02c"/>
    </source>
</evidence>
<proteinExistence type="evidence at protein level"/>
<organism>
    <name type="scientific">Schizosaccharomyces pombe (strain 972 / ATCC 24843)</name>
    <name type="common">Fission yeast</name>
    <dbReference type="NCBI Taxonomy" id="284812"/>
    <lineage>
        <taxon>Eukaryota</taxon>
        <taxon>Fungi</taxon>
        <taxon>Dikarya</taxon>
        <taxon>Ascomycota</taxon>
        <taxon>Taphrinomycotina</taxon>
        <taxon>Schizosaccharomycetes</taxon>
        <taxon>Schizosaccharomycetales</taxon>
        <taxon>Schizosaccharomycetaceae</taxon>
        <taxon>Schizosaccharomyces</taxon>
    </lineage>
</organism>